<reference key="1">
    <citation type="journal article" date="2013" name="Nature">
        <title>The zebrafish reference genome sequence and its relationship to the human genome.</title>
        <authorList>
            <person name="Howe K."/>
            <person name="Clark M.D."/>
            <person name="Torroja C.F."/>
            <person name="Torrance J."/>
            <person name="Berthelot C."/>
            <person name="Muffato M."/>
            <person name="Collins J.E."/>
            <person name="Humphray S."/>
            <person name="McLaren K."/>
            <person name="Matthews L."/>
            <person name="McLaren S."/>
            <person name="Sealy I."/>
            <person name="Caccamo M."/>
            <person name="Churcher C."/>
            <person name="Scott C."/>
            <person name="Barrett J.C."/>
            <person name="Koch R."/>
            <person name="Rauch G.J."/>
            <person name="White S."/>
            <person name="Chow W."/>
            <person name="Kilian B."/>
            <person name="Quintais L.T."/>
            <person name="Guerra-Assuncao J.A."/>
            <person name="Zhou Y."/>
            <person name="Gu Y."/>
            <person name="Yen J."/>
            <person name="Vogel J.H."/>
            <person name="Eyre T."/>
            <person name="Redmond S."/>
            <person name="Banerjee R."/>
            <person name="Chi J."/>
            <person name="Fu B."/>
            <person name="Langley E."/>
            <person name="Maguire S.F."/>
            <person name="Laird G.K."/>
            <person name="Lloyd D."/>
            <person name="Kenyon E."/>
            <person name="Donaldson S."/>
            <person name="Sehra H."/>
            <person name="Almeida-King J."/>
            <person name="Loveland J."/>
            <person name="Trevanion S."/>
            <person name="Jones M."/>
            <person name="Quail M."/>
            <person name="Willey D."/>
            <person name="Hunt A."/>
            <person name="Burton J."/>
            <person name="Sims S."/>
            <person name="McLay K."/>
            <person name="Plumb B."/>
            <person name="Davis J."/>
            <person name="Clee C."/>
            <person name="Oliver K."/>
            <person name="Clark R."/>
            <person name="Riddle C."/>
            <person name="Elliot D."/>
            <person name="Threadgold G."/>
            <person name="Harden G."/>
            <person name="Ware D."/>
            <person name="Begum S."/>
            <person name="Mortimore B."/>
            <person name="Kerry G."/>
            <person name="Heath P."/>
            <person name="Phillimore B."/>
            <person name="Tracey A."/>
            <person name="Corby N."/>
            <person name="Dunn M."/>
            <person name="Johnson C."/>
            <person name="Wood J."/>
            <person name="Clark S."/>
            <person name="Pelan S."/>
            <person name="Griffiths G."/>
            <person name="Smith M."/>
            <person name="Glithero R."/>
            <person name="Howden P."/>
            <person name="Barker N."/>
            <person name="Lloyd C."/>
            <person name="Stevens C."/>
            <person name="Harley J."/>
            <person name="Holt K."/>
            <person name="Panagiotidis G."/>
            <person name="Lovell J."/>
            <person name="Beasley H."/>
            <person name="Henderson C."/>
            <person name="Gordon D."/>
            <person name="Auger K."/>
            <person name="Wright D."/>
            <person name="Collins J."/>
            <person name="Raisen C."/>
            <person name="Dyer L."/>
            <person name="Leung K."/>
            <person name="Robertson L."/>
            <person name="Ambridge K."/>
            <person name="Leongamornlert D."/>
            <person name="McGuire S."/>
            <person name="Gilderthorp R."/>
            <person name="Griffiths C."/>
            <person name="Manthravadi D."/>
            <person name="Nichol S."/>
            <person name="Barker G."/>
            <person name="Whitehead S."/>
            <person name="Kay M."/>
            <person name="Brown J."/>
            <person name="Murnane C."/>
            <person name="Gray E."/>
            <person name="Humphries M."/>
            <person name="Sycamore N."/>
            <person name="Barker D."/>
            <person name="Saunders D."/>
            <person name="Wallis J."/>
            <person name="Babbage A."/>
            <person name="Hammond S."/>
            <person name="Mashreghi-Mohammadi M."/>
            <person name="Barr L."/>
            <person name="Martin S."/>
            <person name="Wray P."/>
            <person name="Ellington A."/>
            <person name="Matthews N."/>
            <person name="Ellwood M."/>
            <person name="Woodmansey R."/>
            <person name="Clark G."/>
            <person name="Cooper J."/>
            <person name="Tromans A."/>
            <person name="Grafham D."/>
            <person name="Skuce C."/>
            <person name="Pandian R."/>
            <person name="Andrews R."/>
            <person name="Harrison E."/>
            <person name="Kimberley A."/>
            <person name="Garnett J."/>
            <person name="Fosker N."/>
            <person name="Hall R."/>
            <person name="Garner P."/>
            <person name="Kelly D."/>
            <person name="Bird C."/>
            <person name="Palmer S."/>
            <person name="Gehring I."/>
            <person name="Berger A."/>
            <person name="Dooley C.M."/>
            <person name="Ersan-Urun Z."/>
            <person name="Eser C."/>
            <person name="Geiger H."/>
            <person name="Geisler M."/>
            <person name="Karotki L."/>
            <person name="Kirn A."/>
            <person name="Konantz J."/>
            <person name="Konantz M."/>
            <person name="Oberlander M."/>
            <person name="Rudolph-Geiger S."/>
            <person name="Teucke M."/>
            <person name="Lanz C."/>
            <person name="Raddatz G."/>
            <person name="Osoegawa K."/>
            <person name="Zhu B."/>
            <person name="Rapp A."/>
            <person name="Widaa S."/>
            <person name="Langford C."/>
            <person name="Yang F."/>
            <person name="Schuster S.C."/>
            <person name="Carter N.P."/>
            <person name="Harrow J."/>
            <person name="Ning Z."/>
            <person name="Herrero J."/>
            <person name="Searle S.M."/>
            <person name="Enright A."/>
            <person name="Geisler R."/>
            <person name="Plasterk R.H."/>
            <person name="Lee C."/>
            <person name="Westerfield M."/>
            <person name="de Jong P.J."/>
            <person name="Zon L.I."/>
            <person name="Postlethwait J.H."/>
            <person name="Nusslein-Volhard C."/>
            <person name="Hubbard T.J."/>
            <person name="Roest Crollius H."/>
            <person name="Rogers J."/>
            <person name="Stemple D.L."/>
        </authorList>
    </citation>
    <scope>NUCLEOTIDE SEQUENCE [LARGE SCALE GENOMIC DNA]</scope>
    <source>
        <strain>Tuebingen</strain>
    </source>
</reference>
<keyword id="KW-0053">Apoptosis</keyword>
<keyword id="KW-0143">Chaperone</keyword>
<keyword id="KW-0156">Chromatin regulator</keyword>
<keyword id="KW-0963">Cytoplasm</keyword>
<keyword id="KW-0539">Nucleus</keyword>
<keyword id="KW-1185">Reference proteome</keyword>
<keyword id="KW-0964">Secreted</keyword>
<keyword id="KW-0813">Transport</keyword>
<dbReference type="EMBL" id="BX510301">
    <property type="protein sequence ID" value="CAM56392.1"/>
    <property type="molecule type" value="Genomic_DNA"/>
</dbReference>
<dbReference type="RefSeq" id="NP_001315205.1">
    <property type="nucleotide sequence ID" value="NM_001328276.1"/>
</dbReference>
<dbReference type="SMR" id="A3KPW9"/>
<dbReference type="FunCoup" id="A3KPW9">
    <property type="interactions" value="1545"/>
</dbReference>
<dbReference type="STRING" id="7955.ENSDARP00000148444"/>
<dbReference type="PaxDb" id="7955-ENSDARP00000117226"/>
<dbReference type="PeptideAtlas" id="A3KPW9"/>
<dbReference type="Ensembl" id="ENSDART00000088760">
    <property type="protein sequence ID" value="ENSDARP00000083193"/>
    <property type="gene ID" value="ENSDARG00000077531"/>
</dbReference>
<dbReference type="Ensembl" id="ENSDART00000135128">
    <property type="protein sequence ID" value="ENSDARP00000117226"/>
    <property type="gene ID" value="ENSDARG00000077531"/>
</dbReference>
<dbReference type="GeneID" id="751663"/>
<dbReference type="KEGG" id="dre:751663"/>
<dbReference type="AGR" id="ZFIN:ZDB-GENE-060307-2"/>
<dbReference type="CTD" id="751663"/>
<dbReference type="ZFIN" id="ZDB-GENE-060307-2">
    <property type="gene designation" value="bag6l"/>
</dbReference>
<dbReference type="eggNOG" id="KOG4248">
    <property type="taxonomic scope" value="Eukaryota"/>
</dbReference>
<dbReference type="HOGENOM" id="CLU_012159_0_0_1"/>
<dbReference type="InParanoid" id="A3KPW9"/>
<dbReference type="OrthoDB" id="1885901at2759"/>
<dbReference type="PhylomeDB" id="A3KPW9"/>
<dbReference type="TreeFam" id="TF328437"/>
<dbReference type="PRO" id="PR:A3KPW9"/>
<dbReference type="Proteomes" id="UP000000437">
    <property type="component" value="Chromosome 19"/>
</dbReference>
<dbReference type="Bgee" id="ENSDARG00000077531">
    <property type="expression patterns" value="Expressed in blastula and 20 other cell types or tissues"/>
</dbReference>
<dbReference type="ExpressionAtlas" id="A3KPW9">
    <property type="expression patterns" value="baseline and differential"/>
</dbReference>
<dbReference type="GO" id="GO:0071818">
    <property type="term" value="C:BAT3 complex"/>
    <property type="evidence" value="ECO:0000250"/>
    <property type="project" value="UniProtKB"/>
</dbReference>
<dbReference type="GO" id="GO:0005829">
    <property type="term" value="C:cytosol"/>
    <property type="evidence" value="ECO:0000250"/>
    <property type="project" value="UniProtKB"/>
</dbReference>
<dbReference type="GO" id="GO:0005576">
    <property type="term" value="C:extracellular region"/>
    <property type="evidence" value="ECO:0007669"/>
    <property type="project" value="UniProtKB-SubCell"/>
</dbReference>
<dbReference type="GO" id="GO:0005634">
    <property type="term" value="C:nucleus"/>
    <property type="evidence" value="ECO:0000250"/>
    <property type="project" value="UniProtKB"/>
</dbReference>
<dbReference type="GO" id="GO:0051787">
    <property type="term" value="F:misfolded protein binding"/>
    <property type="evidence" value="ECO:0000318"/>
    <property type="project" value="GO_Central"/>
</dbReference>
<dbReference type="GO" id="GO:0031593">
    <property type="term" value="F:polyubiquitin modification-dependent protein binding"/>
    <property type="evidence" value="ECO:0000250"/>
    <property type="project" value="UniProtKB"/>
</dbReference>
<dbReference type="GO" id="GO:0070628">
    <property type="term" value="F:proteasome binding"/>
    <property type="evidence" value="ECO:0000250"/>
    <property type="project" value="UniProtKB"/>
</dbReference>
<dbReference type="GO" id="GO:0043022">
    <property type="term" value="F:ribosome binding"/>
    <property type="evidence" value="ECO:0000250"/>
    <property type="project" value="UniProtKB"/>
</dbReference>
<dbReference type="GO" id="GO:0007420">
    <property type="term" value="P:brain development"/>
    <property type="evidence" value="ECO:0000250"/>
    <property type="project" value="UniProtKB"/>
</dbReference>
<dbReference type="GO" id="GO:0006325">
    <property type="term" value="P:chromatin organization"/>
    <property type="evidence" value="ECO:0007669"/>
    <property type="project" value="UniProtKB-KW"/>
</dbReference>
<dbReference type="GO" id="GO:0061857">
    <property type="term" value="P:endoplasmic reticulum stress-induced pre-emptive quality control"/>
    <property type="evidence" value="ECO:0000250"/>
    <property type="project" value="UniProtKB"/>
</dbReference>
<dbReference type="GO" id="GO:0036503">
    <property type="term" value="P:ERAD pathway"/>
    <property type="evidence" value="ECO:0000250"/>
    <property type="project" value="UniProtKB"/>
</dbReference>
<dbReference type="GO" id="GO:0018393">
    <property type="term" value="P:internal peptidyl-lysine acetylation"/>
    <property type="evidence" value="ECO:0000250"/>
    <property type="project" value="UniProtKB"/>
</dbReference>
<dbReference type="GO" id="GO:0042771">
    <property type="term" value="P:intrinsic apoptotic signaling pathway in response to DNA damage by p53 class mediator"/>
    <property type="evidence" value="ECO:0000250"/>
    <property type="project" value="UniProtKB"/>
</dbReference>
<dbReference type="GO" id="GO:0070059">
    <property type="term" value="P:intrinsic apoptotic signaling pathway in response to endoplasmic reticulum stress"/>
    <property type="evidence" value="ECO:0000250"/>
    <property type="project" value="UniProtKB"/>
</dbReference>
<dbReference type="GO" id="GO:0001822">
    <property type="term" value="P:kidney development"/>
    <property type="evidence" value="ECO:0000250"/>
    <property type="project" value="UniProtKB"/>
</dbReference>
<dbReference type="GO" id="GO:0030324">
    <property type="term" value="P:lung development"/>
    <property type="evidence" value="ECO:0000250"/>
    <property type="project" value="UniProtKB"/>
</dbReference>
<dbReference type="GO" id="GO:0032435">
    <property type="term" value="P:negative regulation of proteasomal ubiquitin-dependent protein catabolic process"/>
    <property type="evidence" value="ECO:0000250"/>
    <property type="project" value="UniProtKB"/>
</dbReference>
<dbReference type="GO" id="GO:0045861">
    <property type="term" value="P:negative regulation of proteolysis"/>
    <property type="evidence" value="ECO:0000250"/>
    <property type="project" value="UniProtKB"/>
</dbReference>
<dbReference type="GO" id="GO:0010498">
    <property type="term" value="P:proteasomal protein catabolic process"/>
    <property type="evidence" value="ECO:0000250"/>
    <property type="project" value="UniProtKB"/>
</dbReference>
<dbReference type="GO" id="GO:0050821">
    <property type="term" value="P:protein stabilization"/>
    <property type="evidence" value="ECO:0000250"/>
    <property type="project" value="UniProtKB"/>
</dbReference>
<dbReference type="GO" id="GO:0042981">
    <property type="term" value="P:regulation of apoptotic process"/>
    <property type="evidence" value="ECO:0000250"/>
    <property type="project" value="UniProtKB"/>
</dbReference>
<dbReference type="GO" id="GO:0045995">
    <property type="term" value="P:regulation of embryonic development"/>
    <property type="evidence" value="ECO:0000250"/>
    <property type="project" value="UniProtKB"/>
</dbReference>
<dbReference type="GO" id="GO:0007283">
    <property type="term" value="P:spermatogenesis"/>
    <property type="evidence" value="ECO:0000250"/>
    <property type="project" value="UniProtKB"/>
</dbReference>
<dbReference type="GO" id="GO:0007130">
    <property type="term" value="P:synaptonemal complex assembly"/>
    <property type="evidence" value="ECO:0000250"/>
    <property type="project" value="UniProtKB"/>
</dbReference>
<dbReference type="GO" id="GO:0071816">
    <property type="term" value="P:tail-anchored membrane protein insertion into ER membrane"/>
    <property type="evidence" value="ECO:0000250"/>
    <property type="project" value="UniProtKB"/>
</dbReference>
<dbReference type="GO" id="GO:0006511">
    <property type="term" value="P:ubiquitin-dependent protein catabolic process"/>
    <property type="evidence" value="ECO:0000250"/>
    <property type="project" value="UniProtKB"/>
</dbReference>
<dbReference type="CDD" id="cd01809">
    <property type="entry name" value="Ubl_BAG6"/>
    <property type="match status" value="1"/>
</dbReference>
<dbReference type="FunFam" id="3.10.20.90:FF:000041">
    <property type="entry name" value="large proline-rich protein BAG6 isoform X1"/>
    <property type="match status" value="1"/>
</dbReference>
<dbReference type="Gene3D" id="3.10.20.90">
    <property type="entry name" value="Phosphatidylinositol 3-kinase Catalytic Subunit, Chain A, domain 1"/>
    <property type="match status" value="1"/>
</dbReference>
<dbReference type="InterPro" id="IPR021925">
    <property type="entry name" value="BAG6"/>
</dbReference>
<dbReference type="InterPro" id="IPR048926">
    <property type="entry name" value="Bag6_BAGS"/>
</dbReference>
<dbReference type="InterPro" id="IPR000626">
    <property type="entry name" value="Ubiquitin-like_dom"/>
</dbReference>
<dbReference type="InterPro" id="IPR029071">
    <property type="entry name" value="Ubiquitin-like_domsf"/>
</dbReference>
<dbReference type="PANTHER" id="PTHR15204">
    <property type="entry name" value="LARGE PROLINE-RICH PROTEIN BAG6"/>
    <property type="match status" value="1"/>
</dbReference>
<dbReference type="PANTHER" id="PTHR15204:SF0">
    <property type="entry name" value="LARGE PROLINE-RICH PROTEIN BAG6"/>
    <property type="match status" value="1"/>
</dbReference>
<dbReference type="Pfam" id="PF12057">
    <property type="entry name" value="BAG6"/>
    <property type="match status" value="1"/>
</dbReference>
<dbReference type="Pfam" id="PF20960">
    <property type="entry name" value="Bag6_BAGS"/>
    <property type="match status" value="1"/>
</dbReference>
<dbReference type="Pfam" id="PF00240">
    <property type="entry name" value="ubiquitin"/>
    <property type="match status" value="1"/>
</dbReference>
<dbReference type="SMART" id="SM00213">
    <property type="entry name" value="UBQ"/>
    <property type="match status" value="1"/>
</dbReference>
<dbReference type="SUPFAM" id="SSF54236">
    <property type="entry name" value="Ubiquitin-like"/>
    <property type="match status" value="1"/>
</dbReference>
<dbReference type="PROSITE" id="PS50053">
    <property type="entry name" value="UBIQUITIN_2"/>
    <property type="match status" value="1"/>
</dbReference>
<protein>
    <recommendedName>
        <fullName evidence="4">Large proline-rich protein BAG6</fullName>
    </recommendedName>
    <alternativeName>
        <fullName evidence="1">BCL2-associated athanogene 6</fullName>
    </alternativeName>
    <alternativeName>
        <fullName evidence="1">HLA-B-associated transcript 3</fullName>
    </alternativeName>
</protein>
<evidence type="ECO:0000250" key="1">
    <source>
        <dbReference type="UniProtKB" id="P46379"/>
    </source>
</evidence>
<evidence type="ECO:0000255" key="2">
    <source>
        <dbReference type="PROSITE-ProRule" id="PRU00214"/>
    </source>
</evidence>
<evidence type="ECO:0000256" key="3">
    <source>
        <dbReference type="SAM" id="MobiDB-lite"/>
    </source>
</evidence>
<evidence type="ECO:0000305" key="4"/>
<evidence type="ECO:0000312" key="5">
    <source>
        <dbReference type="EMBL" id="CAM56392.1"/>
    </source>
</evidence>
<organism>
    <name type="scientific">Danio rerio</name>
    <name type="common">Zebrafish</name>
    <name type="synonym">Brachydanio rerio</name>
    <dbReference type="NCBI Taxonomy" id="7955"/>
    <lineage>
        <taxon>Eukaryota</taxon>
        <taxon>Metazoa</taxon>
        <taxon>Chordata</taxon>
        <taxon>Craniata</taxon>
        <taxon>Vertebrata</taxon>
        <taxon>Euteleostomi</taxon>
        <taxon>Actinopterygii</taxon>
        <taxon>Neopterygii</taxon>
        <taxon>Teleostei</taxon>
        <taxon>Ostariophysi</taxon>
        <taxon>Cypriniformes</taxon>
        <taxon>Danionidae</taxon>
        <taxon>Danioninae</taxon>
        <taxon>Danio</taxon>
    </lineage>
</organism>
<feature type="chain" id="PRO_0000403752" description="Large proline-rich protein BAG6">
    <location>
        <begin position="1"/>
        <end position="1160"/>
    </location>
</feature>
<feature type="domain" description="Ubiquitin-like" evidence="2">
    <location>
        <begin position="7"/>
        <end position="82"/>
    </location>
</feature>
<feature type="region of interest" description="Disordered" evidence="3">
    <location>
        <begin position="76"/>
        <end position="114"/>
    </location>
</feature>
<feature type="region of interest" description="Disordered" evidence="3">
    <location>
        <begin position="206"/>
        <end position="261"/>
    </location>
</feature>
<feature type="region of interest" description="Disordered" evidence="3">
    <location>
        <begin position="367"/>
        <end position="422"/>
    </location>
</feature>
<feature type="region of interest" description="Disordered" evidence="3">
    <location>
        <begin position="478"/>
        <end position="547"/>
    </location>
</feature>
<feature type="region of interest" description="Disordered" evidence="3">
    <location>
        <begin position="563"/>
        <end position="628"/>
    </location>
</feature>
<feature type="region of interest" description="Disordered" evidence="3">
    <location>
        <begin position="672"/>
        <end position="711"/>
    </location>
</feature>
<feature type="region of interest" description="Disordered" evidence="3">
    <location>
        <begin position="962"/>
        <end position="1038"/>
    </location>
</feature>
<feature type="region of interest" description="Disordered" evidence="3">
    <location>
        <begin position="1126"/>
        <end position="1160"/>
    </location>
</feature>
<feature type="compositionally biased region" description="Gly residues" evidence="3">
    <location>
        <begin position="85"/>
        <end position="94"/>
    </location>
</feature>
<feature type="compositionally biased region" description="Low complexity" evidence="3">
    <location>
        <begin position="95"/>
        <end position="110"/>
    </location>
</feature>
<feature type="compositionally biased region" description="Low complexity" evidence="3">
    <location>
        <begin position="223"/>
        <end position="233"/>
    </location>
</feature>
<feature type="compositionally biased region" description="Polar residues" evidence="3">
    <location>
        <begin position="247"/>
        <end position="257"/>
    </location>
</feature>
<feature type="compositionally biased region" description="Polar residues" evidence="3">
    <location>
        <begin position="371"/>
        <end position="417"/>
    </location>
</feature>
<feature type="compositionally biased region" description="Low complexity" evidence="3">
    <location>
        <begin position="478"/>
        <end position="495"/>
    </location>
</feature>
<feature type="compositionally biased region" description="Low complexity" evidence="3">
    <location>
        <begin position="566"/>
        <end position="614"/>
    </location>
</feature>
<feature type="compositionally biased region" description="Pro residues" evidence="3">
    <location>
        <begin position="677"/>
        <end position="698"/>
    </location>
</feature>
<feature type="compositionally biased region" description="Low complexity" evidence="3">
    <location>
        <begin position="699"/>
        <end position="708"/>
    </location>
</feature>
<feature type="compositionally biased region" description="Basic and acidic residues" evidence="3">
    <location>
        <begin position="1132"/>
        <end position="1146"/>
    </location>
</feature>
<proteinExistence type="inferred from homology"/>
<accession>A3KPW9</accession>
<gene>
    <name evidence="1" type="primary">Bag6</name>
    <name evidence="1" type="synonym">Bat3</name>
    <name evidence="5" type="ORF">si:ch211-215a10.6</name>
</gene>
<sequence length="1160" mass="124121">MEESGVIEVTVKTLDSQSRTFTVRGEWTVKQFKEHIAASVEISVDKQRLIYQGKVLQDERTLTEYNVDGKVIHLVERPPPQSSQPGGGGGGVSGSSGAADGGSSSSQSSAYTTSHDRNANNYVMLGTFNLPVNIMDPQQIQMSVQQMLAGVGEMGRNVRVSTSTGSSGSVDVHINVDQSVQSEPRMRLHLAENLLRETQALIHRLEGQSSEPSQQETPPPQPSSSSFSAHPMDSSPPPPSVSSSASQTEGETQSGPNHPSPLELVEVLSEVRRVEERLRPFMERTHSILGAATSADYNNNTQEREEDQRTLNLIGESLHLLGNTLVALSDLRCNLSAQPPRHLHVVRPMSHYTSPVMMQSGLPHIPIPMNLGSTVTMTSNSRQTSDGQPQPPHSSNQSDQQGQAPPTPANESNQQTGHGQGTPRVIRITHQTMEPVVMMQMNLDGTTVPLHVPGLPPEFMQAIMHQISQQAVTMATAASAGHQGQQQGTAGAGAQNGESPVPPPPQARVVITRPTLSPRVPQPMGTRGTTINLRAAVPPPSGQQTNQMVSGLVGQLLLPLHTGDQTSTTSSSHSFSFSTSSSTSSSSSFSSASPPLSSANTSGQTSTHTTSTASVGQAQESGPGDNLAQLLGSLLGGAAGAGGGVSGATPSITVTVPGVPAFIQGLSEFIQSGQPVFPSPNQQPPPSQATPPSAPSGPAPTTAPSGGAETLSPELFTGIVQGVLSTMMGSLGAGQGNTESIAQFIQRLSQTSNLFTPGAGDAVGFFGDLLSLVCQSFSMVDMVLLLHGNPQPLSRIQPQLTAFFTEHYLQGREPTDANIASASEDLINELEEYIAESFSTVTVREGVDIIQTNMSFLRQQFTRMATHILRCTDNTFGQRLLYLCTQGLFECLALNLYCLRGEQRALTTVINHRIRRMSAEVNPSLVNWLTSMMSMRLHVILEHNPVTEDQIQHYVIYTQSESARRTEAGSQSSQQSQNMNVEEGLSPAPATTAEEALRSTGDTDGDEAPGRPSAEETRGAVAMATTEREESTGEAEPWAATVPPEWVPIIRRDMLTQRKMKAQPPLSDAYMHGMPAKRRKTAQGEGPHLSLTEAVSRAARTAGVRPVTAPDSLQGELETPELQEAYAQQVKSDIKKRLSDDPDYNHQRFPNTHRVFSEDA</sequence>
<comment type="function">
    <text evidence="1">ATP-independent molecular chaperone preventing the aggregation of misfolded and hydrophobic patches-containing proteins. Functions as part of a cytosolic protein quality control complex, the bag6/bat3 complex, which maintains these client proteins in a soluble state and participates in their proper delivery to the endoplasmic reticulum or alternatively can promote their sorting to the proteasome where they undergo degradation. The bag6/bat3 complex is involved in the post-translational delivery of tail-anchored/type II transmembrane proteins to the endoplasmic reticulum membrane. Similarly, the bag6/bat3 complex also functions as a sorting platform for proteins of the secretory pathway that are mislocalized to the cytosol either delivering them to the proteasome for degradation or to the endoplasmic reticulum. The bag6/bat3 complex also plays a role in the endoplasmic reticulum-associated degradation (ERAD), a quality control mechanism that eliminates unwanted proteins of the endoplasmic reticulum through their retrotranslocation to the cytosol and their targeting to the proteasome. It maintains these retrotranslocated proteins in an unfolded yet soluble state condition in the cytosol to ensure their proper delivery to the proteasome. Also required for selective ubiquitin-mediated degradation of defective nascent chain polypeptides by the proteasome. Also involved in endoplasmic reticulum stress-induced pre-emptive quality control, a mechanism that selectively attenuates the translocation of newly synthesized proteins into the endoplasmic reticulum and reroutes them to the cytosol for proteasomal degradation. May ensure the proper degradation of these proteins and thereby protects the endoplasmic reticulum from protein overload upon stress. By stabilizing a large spectrum of proteins, may indirectly affect different biological processes including apoptosis. By controlling the steady-state expression of the IGF1R receptor, indirectly regulates the insulin-like growth factor receptor signaling pathway.</text>
</comment>
<comment type="function">
    <text evidence="1">When nuclear, may also act as a component of some chromatin regulator complex.</text>
</comment>
<comment type="subunit">
    <text evidence="1">Component of the bag6/bat3 complex.</text>
</comment>
<comment type="subcellular location">
    <subcellularLocation>
        <location evidence="1">Cytoplasm</location>
        <location evidence="1">Cytosol</location>
    </subcellularLocation>
    <subcellularLocation>
        <location evidence="1">Nucleus</location>
    </subcellularLocation>
    <subcellularLocation>
        <location evidence="1">Secreted</location>
        <location evidence="1">Extracellular exosome</location>
    </subcellularLocation>
</comment>
<name>BAG6_DANRE</name>